<proteinExistence type="inferred from homology"/>
<organism>
    <name type="scientific">Salmonella agona (strain SL483)</name>
    <dbReference type="NCBI Taxonomy" id="454166"/>
    <lineage>
        <taxon>Bacteria</taxon>
        <taxon>Pseudomonadati</taxon>
        <taxon>Pseudomonadota</taxon>
        <taxon>Gammaproteobacteria</taxon>
        <taxon>Enterobacterales</taxon>
        <taxon>Enterobacteriaceae</taxon>
        <taxon>Salmonella</taxon>
    </lineage>
</organism>
<accession>B5F150</accession>
<feature type="chain" id="PRO_1000137492" description="Uncharacterized MFS-type transporter YcaD">
    <location>
        <begin position="1"/>
        <end position="382"/>
    </location>
</feature>
<feature type="transmembrane region" description="Helical" evidence="1">
    <location>
        <begin position="8"/>
        <end position="28"/>
    </location>
</feature>
<feature type="transmembrane region" description="Helical" evidence="1">
    <location>
        <begin position="45"/>
        <end position="65"/>
    </location>
</feature>
<feature type="transmembrane region" description="Helical" evidence="1">
    <location>
        <begin position="75"/>
        <end position="95"/>
    </location>
</feature>
<feature type="transmembrane region" description="Helical" evidence="1">
    <location>
        <begin position="102"/>
        <end position="122"/>
    </location>
</feature>
<feature type="transmembrane region" description="Helical" evidence="1">
    <location>
        <begin position="131"/>
        <end position="151"/>
    </location>
</feature>
<feature type="transmembrane region" description="Helical" evidence="1">
    <location>
        <begin position="157"/>
        <end position="177"/>
    </location>
</feature>
<feature type="transmembrane region" description="Helical" evidence="1">
    <location>
        <begin position="204"/>
        <end position="224"/>
    </location>
</feature>
<feature type="transmembrane region" description="Helical" evidence="1">
    <location>
        <begin position="231"/>
        <end position="251"/>
    </location>
</feature>
<feature type="transmembrane region" description="Helical" evidence="1">
    <location>
        <begin position="270"/>
        <end position="290"/>
    </location>
</feature>
<feature type="transmembrane region" description="Helical" evidence="1">
    <location>
        <begin position="291"/>
        <end position="311"/>
    </location>
</feature>
<feature type="transmembrane region" description="Helical" evidence="1">
    <location>
        <begin position="325"/>
        <end position="345"/>
    </location>
</feature>
<feature type="transmembrane region" description="Helical" evidence="1">
    <location>
        <begin position="349"/>
        <end position="369"/>
    </location>
</feature>
<dbReference type="EMBL" id="CP001138">
    <property type="protein sequence ID" value="ACH52606.1"/>
    <property type="molecule type" value="Genomic_DNA"/>
</dbReference>
<dbReference type="RefSeq" id="WP_000109274.1">
    <property type="nucleotide sequence ID" value="NC_011149.1"/>
</dbReference>
<dbReference type="SMR" id="B5F150"/>
<dbReference type="KEGG" id="sea:SeAg_B0972"/>
<dbReference type="HOGENOM" id="CLU_035018_1_2_6"/>
<dbReference type="Proteomes" id="UP000008819">
    <property type="component" value="Chromosome"/>
</dbReference>
<dbReference type="GO" id="GO:0005886">
    <property type="term" value="C:plasma membrane"/>
    <property type="evidence" value="ECO:0007669"/>
    <property type="project" value="UniProtKB-SubCell"/>
</dbReference>
<dbReference type="GO" id="GO:0022857">
    <property type="term" value="F:transmembrane transporter activity"/>
    <property type="evidence" value="ECO:0007669"/>
    <property type="project" value="UniProtKB-UniRule"/>
</dbReference>
<dbReference type="CDD" id="cd17477">
    <property type="entry name" value="MFS_YcaD_like"/>
    <property type="match status" value="1"/>
</dbReference>
<dbReference type="FunFam" id="1.20.1250.20:FF:000041">
    <property type="entry name" value="Uncharacterized MFS-type transporter YcaD"/>
    <property type="match status" value="1"/>
</dbReference>
<dbReference type="FunFam" id="1.20.1250.20:FF:000066">
    <property type="entry name" value="Uncharacterized MFS-type transporter YcaD"/>
    <property type="match status" value="1"/>
</dbReference>
<dbReference type="Gene3D" id="1.20.1250.20">
    <property type="entry name" value="MFS general substrate transporter like domains"/>
    <property type="match status" value="2"/>
</dbReference>
<dbReference type="HAMAP" id="MF_01149">
    <property type="entry name" value="MFS_YcaD"/>
    <property type="match status" value="1"/>
</dbReference>
<dbReference type="InterPro" id="IPR011701">
    <property type="entry name" value="MFS"/>
</dbReference>
<dbReference type="InterPro" id="IPR020846">
    <property type="entry name" value="MFS_dom"/>
</dbReference>
<dbReference type="InterPro" id="IPR036259">
    <property type="entry name" value="MFS_trans_sf"/>
</dbReference>
<dbReference type="InterPro" id="IPR023745">
    <property type="entry name" value="MFS_YcaD"/>
</dbReference>
<dbReference type="InterPro" id="IPR047200">
    <property type="entry name" value="MFS_YcaD-like"/>
</dbReference>
<dbReference type="NCBIfam" id="NF002962">
    <property type="entry name" value="PRK03633.1"/>
    <property type="match status" value="1"/>
</dbReference>
<dbReference type="PANTHER" id="PTHR23521">
    <property type="entry name" value="TRANSPORTER MFS SUPERFAMILY"/>
    <property type="match status" value="1"/>
</dbReference>
<dbReference type="PANTHER" id="PTHR23521:SF2">
    <property type="entry name" value="TRANSPORTER MFS SUPERFAMILY"/>
    <property type="match status" value="1"/>
</dbReference>
<dbReference type="Pfam" id="PF07690">
    <property type="entry name" value="MFS_1"/>
    <property type="match status" value="1"/>
</dbReference>
<dbReference type="SUPFAM" id="SSF103473">
    <property type="entry name" value="MFS general substrate transporter"/>
    <property type="match status" value="1"/>
</dbReference>
<dbReference type="PROSITE" id="PS50850">
    <property type="entry name" value="MFS"/>
    <property type="match status" value="1"/>
</dbReference>
<keyword id="KW-0997">Cell inner membrane</keyword>
<keyword id="KW-1003">Cell membrane</keyword>
<keyword id="KW-0472">Membrane</keyword>
<keyword id="KW-0812">Transmembrane</keyword>
<keyword id="KW-1133">Transmembrane helix</keyword>
<keyword id="KW-0813">Transport</keyword>
<name>YCAD_SALA4</name>
<reference key="1">
    <citation type="journal article" date="2011" name="J. Bacteriol.">
        <title>Comparative genomics of 28 Salmonella enterica isolates: evidence for CRISPR-mediated adaptive sublineage evolution.</title>
        <authorList>
            <person name="Fricke W.F."/>
            <person name="Mammel M.K."/>
            <person name="McDermott P.F."/>
            <person name="Tartera C."/>
            <person name="White D.G."/>
            <person name="Leclerc J.E."/>
            <person name="Ravel J."/>
            <person name="Cebula T.A."/>
        </authorList>
    </citation>
    <scope>NUCLEOTIDE SEQUENCE [LARGE SCALE GENOMIC DNA]</scope>
    <source>
        <strain>SL483</strain>
    </source>
</reference>
<sequence length="382" mass="41578">MSTYTRPVMLLLCGLLLLTLAIAVLNTLVPLWLAQANLPTWQVGMVSSSYFTGNLVGTLFTGYLIKRIGFNRSYYLASLIFAAGCVGLGVMVGFWSWMSWRFIAGIGCAMIWVVVESALMCSGTSHNRGRLLAAYMMVYYMGTFLGQLLVSKVSGELLHVLPWVTGMILAGILPLLFTRIVNQQTQTRHSSSISAMLKLRQARLGVNGCIISGIVLGSLYGLMPLYLKHQGMANASIGFWMAVLVSAGILGQWPMGRLADKFGRLLVLRVQVFVVILGSIAMLTQAAMAPALFILGAAGFTLYPVAMAWACEKVEHHQLVAMNQALLLSYTVGSLLGPSFAAMLMQNYSDNLLFIMIASVSFIYLLMLLRNAGQTPNPVAHI</sequence>
<gene>
    <name evidence="1" type="primary">ycaD</name>
    <name type="ordered locus">SeAg_B0972</name>
</gene>
<comment type="subcellular location">
    <subcellularLocation>
        <location evidence="1">Cell inner membrane</location>
        <topology evidence="1">Multi-pass membrane protein</topology>
    </subcellularLocation>
</comment>
<comment type="similarity">
    <text evidence="1">Belongs to the major facilitator superfamily. YcaD (TC 2.A.1.26) family.</text>
</comment>
<evidence type="ECO:0000255" key="1">
    <source>
        <dbReference type="HAMAP-Rule" id="MF_01149"/>
    </source>
</evidence>
<protein>
    <recommendedName>
        <fullName evidence="1">Uncharacterized MFS-type transporter YcaD</fullName>
    </recommendedName>
</protein>